<reference key="1">
    <citation type="journal article" date="2010" name="J. Med. Genet.">
        <title>Nonsense mutation of the stereociliar membrane protein gene PTPRQ in human hearing loss DFNB84.</title>
        <authorList>
            <person name="Shahin H."/>
            <person name="Rahil M."/>
            <person name="Abu Rayan A."/>
            <person name="Avraham K.B."/>
            <person name="King M.C."/>
            <person name="Kanaan M."/>
            <person name="Walsh T."/>
        </authorList>
    </citation>
    <scope>NUCLEOTIDE SEQUENCE [MRNA] (ISOFORM 2)</scope>
    <source>
        <strain>C57BL/6J</strain>
        <tissue>Cochlea</tissue>
    </source>
</reference>
<reference key="2">
    <citation type="journal article" date="2009" name="PLoS Biol.">
        <title>Lineage-specific biology revealed by a finished genome assembly of the mouse.</title>
        <authorList>
            <person name="Church D.M."/>
            <person name="Goodstadt L."/>
            <person name="Hillier L.W."/>
            <person name="Zody M.C."/>
            <person name="Goldstein S."/>
            <person name="She X."/>
            <person name="Bult C.J."/>
            <person name="Agarwala R."/>
            <person name="Cherry J.L."/>
            <person name="DiCuccio M."/>
            <person name="Hlavina W."/>
            <person name="Kapustin Y."/>
            <person name="Meric P."/>
            <person name="Maglott D."/>
            <person name="Birtle Z."/>
            <person name="Marques A.C."/>
            <person name="Graves T."/>
            <person name="Zhou S."/>
            <person name="Teague B."/>
            <person name="Potamousis K."/>
            <person name="Churas C."/>
            <person name="Place M."/>
            <person name="Herschleb J."/>
            <person name="Runnheim R."/>
            <person name="Forrest D."/>
            <person name="Amos-Landgraf J."/>
            <person name="Schwartz D.C."/>
            <person name="Cheng Z."/>
            <person name="Lindblad-Toh K."/>
            <person name="Eichler E.E."/>
            <person name="Ponting C.P."/>
        </authorList>
    </citation>
    <scope>NUCLEOTIDE SEQUENCE [LARGE SCALE GENOMIC DNA]</scope>
    <source>
        <strain>C57BL/6J</strain>
    </source>
</reference>
<reference key="3">
    <citation type="journal article" date="2012" name="Am. J. Hum. Genet.">
        <title>Mutations in OTOGL, encoding the inner ear protein otogelin-like, cause moderate sensorineural hearing loss.</title>
        <authorList>
            <person name="Yariz K.O."/>
            <person name="Duman D."/>
            <person name="Seco C.Z."/>
            <person name="Dallman J."/>
            <person name="Huang M."/>
            <person name="Peters T.A."/>
            <person name="Sirmaci A."/>
            <person name="Lu N."/>
            <person name="Schraders M."/>
            <person name="Skromne I."/>
            <person name="Oostrik J."/>
            <person name="Diaz-Horta O."/>
            <person name="Young J.I."/>
            <person name="Tokgoz-Yilmaz S."/>
            <person name="Konukseven O."/>
            <person name="Shahin H."/>
            <person name="Hetterschijt L."/>
            <person name="Kanaan M."/>
            <person name="Oonk A.M."/>
            <person name="Edwards Y.J."/>
            <person name="Li H."/>
            <person name="Atalay S."/>
            <person name="Blanton S."/>
            <person name="Desmidt A.A."/>
            <person name="Liu X.Z."/>
            <person name="Pennings R.J."/>
            <person name="Lu Z."/>
            <person name="Chen Z.Y."/>
            <person name="Kremer H."/>
            <person name="Tekin M."/>
        </authorList>
    </citation>
    <scope>DEVELOPMENTAL STAGE</scope>
</reference>
<organism>
    <name type="scientific">Mus musculus</name>
    <name type="common">Mouse</name>
    <dbReference type="NCBI Taxonomy" id="10090"/>
    <lineage>
        <taxon>Eukaryota</taxon>
        <taxon>Metazoa</taxon>
        <taxon>Chordata</taxon>
        <taxon>Craniata</taxon>
        <taxon>Vertebrata</taxon>
        <taxon>Euteleostomi</taxon>
        <taxon>Mammalia</taxon>
        <taxon>Eutheria</taxon>
        <taxon>Euarchontoglires</taxon>
        <taxon>Glires</taxon>
        <taxon>Rodentia</taxon>
        <taxon>Myomorpha</taxon>
        <taxon>Muroidea</taxon>
        <taxon>Muridae</taxon>
        <taxon>Murinae</taxon>
        <taxon>Mus</taxon>
        <taxon>Mus</taxon>
    </lineage>
</organism>
<dbReference type="EMBL" id="GU140005">
    <property type="protein sequence ID" value="ADC39942.1"/>
    <property type="molecule type" value="mRNA"/>
</dbReference>
<dbReference type="EMBL" id="AC113439">
    <property type="status" value="NOT_ANNOTATED_CDS"/>
    <property type="molecule type" value="Genomic_DNA"/>
</dbReference>
<dbReference type="EMBL" id="AC123948">
    <property type="status" value="NOT_ANNOTATED_CDS"/>
    <property type="molecule type" value="Genomic_DNA"/>
</dbReference>
<dbReference type="CCDS" id="CCDS56747.1">
    <molecule id="F7A4A7-1"/>
</dbReference>
<dbReference type="RefSeq" id="NP_001171038.1">
    <molecule id="F7A4A7-1"/>
    <property type="nucleotide sequence ID" value="NM_001177567.2"/>
</dbReference>
<dbReference type="SMR" id="F7A4A7"/>
<dbReference type="BioGRID" id="554738">
    <property type="interactions" value="1"/>
</dbReference>
<dbReference type="FunCoup" id="F7A4A7">
    <property type="interactions" value="187"/>
</dbReference>
<dbReference type="STRING" id="10090.ENSMUSP00000129467"/>
<dbReference type="GlyCosmos" id="F7A4A7">
    <property type="glycosylation" value="7 sites, No reported glycans"/>
</dbReference>
<dbReference type="GlyGen" id="F7A4A7">
    <property type="glycosylation" value="10 sites, 1 O-linked glycan (1 site)"/>
</dbReference>
<dbReference type="PhosphoSitePlus" id="F7A4A7"/>
<dbReference type="PaxDb" id="10090-ENSMUSP00000129467"/>
<dbReference type="Antibodypedia" id="51688">
    <property type="antibodies" value="17 antibodies from 9 providers"/>
</dbReference>
<dbReference type="DNASU" id="628870"/>
<dbReference type="Ensembl" id="ENSMUST00000165341.5">
    <molecule id="F7A4A7-1"/>
    <property type="protein sequence ID" value="ENSMUSP00000129467.3"/>
    <property type="gene ID" value="ENSMUSG00000091455.5"/>
</dbReference>
<dbReference type="GeneID" id="628870"/>
<dbReference type="KEGG" id="mmu:628870"/>
<dbReference type="UCSC" id="uc011xnc.1">
    <molecule id="F7A4A7-1"/>
    <property type="organism name" value="mouse"/>
</dbReference>
<dbReference type="AGR" id="MGI:3647600"/>
<dbReference type="CTD" id="283310"/>
<dbReference type="MGI" id="MGI:3647600">
    <property type="gene designation" value="Otogl"/>
</dbReference>
<dbReference type="VEuPathDB" id="HostDB:ENSMUSG00000091455"/>
<dbReference type="eggNOG" id="KOG1216">
    <property type="taxonomic scope" value="Eukaryota"/>
</dbReference>
<dbReference type="GeneTree" id="ENSGT00940000160698"/>
<dbReference type="HOGENOM" id="CLU_000076_0_0_1"/>
<dbReference type="InParanoid" id="F7A4A7"/>
<dbReference type="OMA" id="LNGTMKC"/>
<dbReference type="OrthoDB" id="8921018at2759"/>
<dbReference type="PhylomeDB" id="F7A4A7"/>
<dbReference type="TreeFam" id="TF330609"/>
<dbReference type="BioGRID-ORCS" id="628870">
    <property type="hits" value="1 hit in 75 CRISPR screens"/>
</dbReference>
<dbReference type="ChiTaRS" id="Otogl">
    <property type="organism name" value="mouse"/>
</dbReference>
<dbReference type="PRO" id="PR:F7A4A7"/>
<dbReference type="Proteomes" id="UP000000589">
    <property type="component" value="Chromosome 10"/>
</dbReference>
<dbReference type="RNAct" id="F7A4A7">
    <property type="molecule type" value="protein"/>
</dbReference>
<dbReference type="Bgee" id="ENSMUSG00000091455">
    <property type="expression patterns" value="Expressed in cochlear duct of membranous labyrinth and 10 other cell types or tissues"/>
</dbReference>
<dbReference type="GO" id="GO:0005576">
    <property type="term" value="C:extracellular region"/>
    <property type="evidence" value="ECO:0007669"/>
    <property type="project" value="UniProtKB-SubCell"/>
</dbReference>
<dbReference type="GO" id="GO:0046556">
    <property type="term" value="F:alpha-L-arabinofuranosidase activity"/>
    <property type="evidence" value="ECO:0007669"/>
    <property type="project" value="InterPro"/>
</dbReference>
<dbReference type="GO" id="GO:0060122">
    <property type="term" value="P:inner ear receptor cell stereocilium organization"/>
    <property type="evidence" value="ECO:0000315"/>
    <property type="project" value="MGI"/>
</dbReference>
<dbReference type="GO" id="GO:0046373">
    <property type="term" value="P:L-arabinose metabolic process"/>
    <property type="evidence" value="ECO:0007669"/>
    <property type="project" value="InterPro"/>
</dbReference>
<dbReference type="GO" id="GO:0008104">
    <property type="term" value="P:protein localization"/>
    <property type="evidence" value="ECO:0000315"/>
    <property type="project" value="MGI"/>
</dbReference>
<dbReference type="GO" id="GO:0007605">
    <property type="term" value="P:sensory perception of sound"/>
    <property type="evidence" value="ECO:0000315"/>
    <property type="project" value="MGI"/>
</dbReference>
<dbReference type="GO" id="GO:0055127">
    <property type="term" value="P:vibrational conductance of sound to the inner ear"/>
    <property type="evidence" value="ECO:0000315"/>
    <property type="project" value="MGI"/>
</dbReference>
<dbReference type="CDD" id="cd19941">
    <property type="entry name" value="TIL"/>
    <property type="match status" value="4"/>
</dbReference>
<dbReference type="Gene3D" id="2.80.10.50">
    <property type="match status" value="1"/>
</dbReference>
<dbReference type="Gene3D" id="2.10.25.10">
    <property type="entry name" value="Laminin"/>
    <property type="match status" value="5"/>
</dbReference>
<dbReference type="InterPro" id="IPR007934">
    <property type="entry name" value="AbfB_ABD"/>
</dbReference>
<dbReference type="InterPro" id="IPR036195">
    <property type="entry name" value="AbfB_ABD_sf"/>
</dbReference>
<dbReference type="InterPro" id="IPR006207">
    <property type="entry name" value="Cys_knot_C"/>
</dbReference>
<dbReference type="InterPro" id="IPR050780">
    <property type="entry name" value="Mucin_vWF_Thrombospondin_sf"/>
</dbReference>
<dbReference type="InterPro" id="IPR036084">
    <property type="entry name" value="Ser_inhib-like_sf"/>
</dbReference>
<dbReference type="InterPro" id="IPR002919">
    <property type="entry name" value="TIL_dom"/>
</dbReference>
<dbReference type="InterPro" id="IPR014853">
    <property type="entry name" value="VWF/SSPO/ZAN-like_Cys-rich_dom"/>
</dbReference>
<dbReference type="InterPro" id="IPR001007">
    <property type="entry name" value="VWF_dom"/>
</dbReference>
<dbReference type="InterPro" id="IPR001846">
    <property type="entry name" value="VWF_type-D"/>
</dbReference>
<dbReference type="PANTHER" id="PTHR11339">
    <property type="entry name" value="EXTRACELLULAR MATRIX GLYCOPROTEIN RELATED"/>
    <property type="match status" value="1"/>
</dbReference>
<dbReference type="PANTHER" id="PTHR11339:SF386">
    <property type="entry name" value="HEMOLECTIN, ISOFORM A"/>
    <property type="match status" value="1"/>
</dbReference>
<dbReference type="Pfam" id="PF05270">
    <property type="entry name" value="AbfB"/>
    <property type="match status" value="1"/>
</dbReference>
<dbReference type="Pfam" id="PF08742">
    <property type="entry name" value="C8"/>
    <property type="match status" value="4"/>
</dbReference>
<dbReference type="Pfam" id="PF01826">
    <property type="entry name" value="TIL"/>
    <property type="match status" value="1"/>
</dbReference>
<dbReference type="Pfam" id="PF00094">
    <property type="entry name" value="VWD"/>
    <property type="match status" value="4"/>
</dbReference>
<dbReference type="SMART" id="SM00832">
    <property type="entry name" value="C8"/>
    <property type="match status" value="4"/>
</dbReference>
<dbReference type="SMART" id="SM00041">
    <property type="entry name" value="CT"/>
    <property type="match status" value="1"/>
</dbReference>
<dbReference type="SMART" id="SM00215">
    <property type="entry name" value="VWC_out"/>
    <property type="match status" value="2"/>
</dbReference>
<dbReference type="SMART" id="SM00216">
    <property type="entry name" value="VWD"/>
    <property type="match status" value="4"/>
</dbReference>
<dbReference type="SUPFAM" id="SSF110221">
    <property type="entry name" value="AbfB domain"/>
    <property type="match status" value="1"/>
</dbReference>
<dbReference type="SUPFAM" id="SSF57567">
    <property type="entry name" value="Serine protease inhibitors"/>
    <property type="match status" value="5"/>
</dbReference>
<dbReference type="PROSITE" id="PS01225">
    <property type="entry name" value="CTCK_2"/>
    <property type="match status" value="1"/>
</dbReference>
<dbReference type="PROSITE" id="PS51233">
    <property type="entry name" value="VWFD"/>
    <property type="match status" value="4"/>
</dbReference>
<accession>F7A4A7</accession>
<accession>D3JEN5</accession>
<protein>
    <recommendedName>
        <fullName>Otogelin-like protein</fullName>
    </recommendedName>
</protein>
<sequence>MVPWRALSLPILLVSLRGYVCASSVLSETSESEFYENEQRRALLAVQFEATSPRYFFHEAINWGESKIKGSCPHECLNGAFCSKTGTCDCQIFQALGTRCQIVPNMGSGRDGICKTWGQYHFETFDGIYYYFPGSCSYIFAKDCGNLEPQYTVWVHNSPKCLGSVYSCYRSISLFFSNQEEIRIYGHEIRKNGISLSLPQTLGQVHLEKVADYILVKTTFGFSLAWDGISGIYLKLSEEHRGKSCGLCANYNGIQSDDFVILQEDYTEDIAMFANSWLVLTPDDTKCVPTPSDFPNPCSSGMPAFEAIFFKCQILLQFPFLSCHEYIDPYLYIASCVNDLCKTDDDETYCRAATEYARACSHAGFPIQDWRDDFPACTDKCDDSFVHRDCISCCPPSCTFEKQCLGSNLHCLDGCYCADGLIMDNGTCISLESCPCSFHGLAYSVGSKIEQECTECVCVGGVWNCTEHDCPVQCSVVGDSHFTTFDGRHYSFIGLCQYILVKGTGKDRFTITLQKAHCEQNLGLVCLQSITLILEDDFNKQVTLSRGGQIVTSPNQGFTLNGIVEIQTLSSLFILLRTTFGLKILFAIDGERIYIQLSSAWKRRTLGLCGTFNGNIRDDFLSPSGMIEGTPQLHAHAWRVSSTCFAPVHVPMVDPCNINQQNIGYAAHCDVIHQELFAPCHVYVSPGLYYQLCRHDACKCGSPCLCNALAHYAYLCGQRGVPIDFRAHISFCAVVCQKGMLYHHCSSLCLRSCTSLSSPEQCKDDCAEGCNCPEGKFYEETLNFCVPIYHCRCHYRGSIYQPGELIPTPSGLCQCSNGTVKCDELATPSTVHACPEGKEYFDCRFPDPALPAGGINCETTCANLAMNFTCAPSSPCISGCVCAAGMAEHKGKCYVPESCPCIWKDWEYSSGEVISTPCYTCVCRRGMFNCTYYPCPAVCTVYGDRHYHSFDGLEYDYISDCQVFLIKSTDDSDISVISQNKKCFDNDIVCSKSVLISIGDTEIYLNDAPYKQKRSGFFLESRPEYQLWKAGFYIVIYFPEEDITILWDEKTTIHIKVGPQWKNKLAGLCGNFDKCTSNDMTTSNNIEVRNAQVFGDSWALGQCEDLMEALKPCEAHQNKFPYAKRECSILYSDVFAPCRNVIDVTSFAKNCHEDTCNCNLGGDCECLCTSVAAYAYKCCQEGVPVHWRSPTVCALDCEYYNQGLGEGPYMLASYGQSGLVLGANMTSRSVFSLPRSNNRGNLFFIFMITPGLFKEKTSSLALVSLESAERPNYFLYVHDNDTLSLKLWRANSEFHQRATFFHHQGLWIPGYSAFELYSKKGYFIVFMGSSVKASKYDDSEEFKQSSSFSIEEIQAVVPYRRMCEWRYEPCATPCFKTCSDPEALACTFLPPVEGCLPYCPKNMILDETTLKCVHPEDCIPLFPTEPALPPDITPSDMTPTPGLECEPQQFDPVYNCSQYICLNMEWTFYNWSLNCPKDLEMPDCGFRGWPVQVNTDICCPEWECPCRCSMLSELSIITFDGNSAALSSMASYILVRVPGEIVVVHIDKCSMNQNGHALKKPASFGRISGLCFKKLNVTTSIHKILINRVVRKVDVDSIVVPLPFSSHELFIEDSGTMYVITTPAGLIIKWAHLTGIIDIHFGPQFNLSSYTEGLCGICNDNPDDDLRMQNGTIITNMEDIELFIGSWEIEKSFEVTMRRPVRNCTEYDCSHCIELLNREGFIPCHDKVSPRDFCEKMWINYTYFWSYECDAISAYVALCNKFDICIQWRTPDYCPLSCPEGKEYQPCVRPCEARTCLNKWFYGHSSCLNLREDCVCKNGTILHRPDKTLCIPEQECVCTDREEHPRSAGEIWNGGIDECTLYKCLEDGNIIPIEPVCEEEPSPICERTAEVVIGIVDKLTCCSKKVCGCDMSLCDRTIPPCTNSQKLIVGYSALSCCPQYECECDTVRCPDISTPVCRDDQFVLQVRQGEPCCFYPSCVCKTCTEPTPQCTDGEFLTVNINTTHLCCPQYYCVCEPDLCPPPSLECAKDMNLVKENVSGQCCPNWRCECNCETLVMPTCDVGEFAAIDQNFQTDCGCVQYLCEKDDVCVFQEVSVLNPGQSLIKYLEEEFCYIIECLDEKDNYTDFHTLNVTMVNCSKDCDAHQIYIPSSSDYDCCGTCKNISCKFIMENGTSVIYEEGSTWHYNCSTYECVNTEEGATILNYSMVCPPFNETECKLNEGIVKLYNEGCCKICKREERICQKVIIKSIIKKQDCVSQSSISVASCDGKCPSATIYNINVESHLRFCKCCRENGVRNVTVPLHCSGNGTEVMYTLQEPIDCTCQWN</sequence>
<comment type="subcellular location">
    <subcellularLocation>
        <location evidence="7">Secreted</location>
    </subcellularLocation>
</comment>
<comment type="alternative products">
    <event type="alternative splicing"/>
    <isoform>
        <id>F7A4A7-1</id>
        <name>1</name>
        <sequence type="displayed"/>
    </isoform>
    <isoform>
        <id>F7A4A7-2</id>
        <name>2</name>
        <sequence type="described" ref="VSP_045177"/>
    </isoform>
</comment>
<comment type="developmental stage">
    <text evidence="5">At 17.5 dpc, primarily detected in the spiral prominence and the Claudius cells and weakly in hair cells (at protein level). Also detected in the lumen surface of interdental cells in the proximity of Reissner's membrane and at the base of nascent tectorial membrane (at protein level). Similar expression pattern in P0 cochlea, with additional detection in some supporting cells (at protein level). At the same stage, in saccule, weakly expressed in hair cells and more prominently in the saccular roof (at protein level). By P6, expression becomes more restricted. Mainly detected in the outer hair cells, Deiter's cells and Claudius cells (at protein level). In the tectorial membrane, localized to the base. In the saccule, detected at high levels in the saccule roof with little change in the hair cells (at protein level).</text>
</comment>
<comment type="similarity">
    <text evidence="7">Belongs to the otogelin family.</text>
</comment>
<gene>
    <name type="primary">Otogl</name>
</gene>
<evidence type="ECO:0000250" key="1"/>
<evidence type="ECO:0000255" key="2"/>
<evidence type="ECO:0000255" key="3">
    <source>
        <dbReference type="PROSITE-ProRule" id="PRU00039"/>
    </source>
</evidence>
<evidence type="ECO:0000255" key="4">
    <source>
        <dbReference type="PROSITE-ProRule" id="PRU00580"/>
    </source>
</evidence>
<evidence type="ECO:0000269" key="5">
    <source>
    </source>
</evidence>
<evidence type="ECO:0000303" key="6">
    <source>
    </source>
</evidence>
<evidence type="ECO:0000305" key="7"/>
<feature type="signal peptide" evidence="2">
    <location>
        <begin position="1"/>
        <end position="22"/>
    </location>
</feature>
<feature type="chain" id="PRO_0000421106" description="Otogelin-like protein">
    <location>
        <begin position="23"/>
        <end position="2325"/>
    </location>
</feature>
<feature type="domain" description="VWFD 1" evidence="4">
    <location>
        <begin position="112"/>
        <end position="288"/>
    </location>
</feature>
<feature type="domain" description="VWFD 2" evidence="4">
    <location>
        <begin position="472"/>
        <end position="645"/>
    </location>
</feature>
<feature type="domain" description="TIL 1">
    <location>
        <begin position="736"/>
        <end position="791"/>
    </location>
</feature>
<feature type="domain" description="VWFD 3" evidence="4">
    <location>
        <begin position="937"/>
        <end position="1114"/>
    </location>
</feature>
<feature type="domain" description="TIL 2">
    <location>
        <begin position="1366"/>
        <end position="1418"/>
    </location>
</feature>
<feature type="domain" description="VWFD 4" evidence="4">
    <location>
        <begin position="1506"/>
        <end position="1695"/>
    </location>
</feature>
<feature type="domain" description="CTCK" evidence="3">
    <location>
        <begin position="2233"/>
        <end position="2325"/>
    </location>
</feature>
<feature type="glycosylation site" description="N-linked (GlcNAc...) asparagine" evidence="2">
    <location>
        <position position="425"/>
    </location>
</feature>
<feature type="glycosylation site" description="N-linked (GlcNAc...) asparagine" evidence="2">
    <location>
        <position position="817"/>
    </location>
</feature>
<feature type="glycosylation site" description="N-linked (GlcNAc...) asparagine" evidence="2">
    <location>
        <position position="867"/>
    </location>
</feature>
<feature type="glycosylation site" description="N-linked (GlcNAc...) asparagine" evidence="2">
    <location>
        <position position="1280"/>
    </location>
</feature>
<feature type="glycosylation site" description="N-linked (GlcNAc...) asparagine" evidence="2">
    <location>
        <position position="1576"/>
    </location>
</feature>
<feature type="glycosylation site" description="N-linked (GlcNAc...) asparagine" evidence="2">
    <location>
        <position position="2170"/>
    </location>
</feature>
<feature type="glycosylation site" description="N-linked (GlcNAc...) asparagine" evidence="2">
    <location>
        <position position="2296"/>
    </location>
</feature>
<feature type="disulfide bond" evidence="4">
    <location>
        <begin position="114"/>
        <end position="248"/>
    </location>
</feature>
<feature type="disulfide bond" evidence="4">
    <location>
        <begin position="136"/>
        <end position="287"/>
    </location>
</feature>
<feature type="disulfide bond" evidence="4">
    <location>
        <begin position="474"/>
        <end position="609"/>
    </location>
</feature>
<feature type="disulfide bond" evidence="4">
    <location>
        <begin position="496"/>
        <end position="644"/>
    </location>
</feature>
<feature type="disulfide bond" evidence="4">
    <location>
        <begin position="518"/>
        <end position="526"/>
    </location>
</feature>
<feature type="disulfide bond" evidence="4">
    <location>
        <begin position="939"/>
        <end position="1069"/>
    </location>
</feature>
<feature type="disulfide bond" evidence="4">
    <location>
        <begin position="961"/>
        <end position="1113"/>
    </location>
</feature>
<feature type="disulfide bond" evidence="4">
    <location>
        <begin position="983"/>
        <end position="990"/>
    </location>
</feature>
<feature type="disulfide bond" evidence="4">
    <location>
        <begin position="1508"/>
        <end position="1655"/>
    </location>
</feature>
<feature type="disulfide bond" evidence="4">
    <location>
        <begin position="1549"/>
        <end position="1571"/>
    </location>
</feature>
<feature type="disulfide bond" evidence="1">
    <location>
        <begin position="2233"/>
        <end position="2289"/>
    </location>
</feature>
<feature type="disulfide bond" evidence="1">
    <location>
        <begin position="2254"/>
        <end position="2303"/>
    </location>
</feature>
<feature type="disulfide bond" evidence="1">
    <location>
        <begin position="2265"/>
        <end position="2320"/>
    </location>
</feature>
<feature type="disulfide bond" evidence="1">
    <location>
        <begin position="2269"/>
        <end position="2322"/>
    </location>
</feature>
<feature type="splice variant" id="VSP_045177" description="In isoform 2." evidence="6">
    <original>SSISVASCDGKCPSATIYNINVESHLRFCKCCRENGVRNVTVPLHCSGNGTEVMYTLQEPIDCTCQWN</original>
    <variation>RLVWHLVMGNARQLPYITSMLKVT</variation>
    <location>
        <begin position="2258"/>
        <end position="2325"/>
    </location>
</feature>
<keyword id="KW-0025">Alternative splicing</keyword>
<keyword id="KW-1015">Disulfide bond</keyword>
<keyword id="KW-0325">Glycoprotein</keyword>
<keyword id="KW-1185">Reference proteome</keyword>
<keyword id="KW-0677">Repeat</keyword>
<keyword id="KW-0964">Secreted</keyword>
<keyword id="KW-0732">Signal</keyword>
<proteinExistence type="evidence at protein level"/>
<name>OTOGL_MOUSE</name>